<sequence length="86" mass="8063">NQPGPPGPPGPPGSAGEPGPGGRPGFPGTPGMQGPQGERGLPGEXGERGLPGPPGPQGESRTGPPGSTGSRGPPGPPGRPGDSGIR</sequence>
<organism>
    <name type="scientific">Bos taurus</name>
    <name type="common">Bovine</name>
    <dbReference type="NCBI Taxonomy" id="9913"/>
    <lineage>
        <taxon>Eukaryota</taxon>
        <taxon>Metazoa</taxon>
        <taxon>Chordata</taxon>
        <taxon>Craniata</taxon>
        <taxon>Vertebrata</taxon>
        <taxon>Euteleostomi</taxon>
        <taxon>Mammalia</taxon>
        <taxon>Eutheria</taxon>
        <taxon>Laurasiatheria</taxon>
        <taxon>Artiodactyla</taxon>
        <taxon>Ruminantia</taxon>
        <taxon>Pecora</taxon>
        <taxon>Bovidae</taxon>
        <taxon>Bovinae</taxon>
        <taxon>Bos</taxon>
    </lineage>
</organism>
<gene>
    <name type="primary">COL12A1</name>
</gene>
<reference key="1">
    <citation type="journal article" date="1988" name="FEBS Lett.">
        <title>Bovine type XII collagen: amino acid sequence of a 10 kDa pepsin fragment from periodontal ligament reveals a high degree of homology with the chicken alpha 1(XII) sequence.</title>
        <authorList>
            <person name="Dublet B."/>
            <person name="Dixon E."/>
            <person name="de Miguel E."/>
            <person name="van der Rest M."/>
        </authorList>
    </citation>
    <scope>PROTEIN SEQUENCE</scope>
    <scope>HYDROXYLATION AT PRO-6; PRO-9; PRO-12; PRO-18; PRO-24; PRO-27; PRO-30; PRO-42; PRO-51; PRO-54; PRO-65; PRO-74; PRO-77 AND PRO-80</scope>
</reference>
<keyword id="KW-0130">Cell adhesion</keyword>
<keyword id="KW-0176">Collagen</keyword>
<keyword id="KW-0903">Direct protein sequencing</keyword>
<keyword id="KW-1015">Disulfide bond</keyword>
<keyword id="KW-0272">Extracellular matrix</keyword>
<keyword id="KW-0379">Hydroxylation</keyword>
<keyword id="KW-1185">Reference proteome</keyword>
<keyword id="KW-0677">Repeat</keyword>
<keyword id="KW-0964">Secreted</keyword>
<protein>
    <recommendedName>
        <fullName>Collagen alpha-1(XII) chain</fullName>
    </recommendedName>
</protein>
<evidence type="ECO:0000250" key="1"/>
<evidence type="ECO:0000256" key="2">
    <source>
        <dbReference type="SAM" id="MobiDB-lite"/>
    </source>
</evidence>
<evidence type="ECO:0000269" key="3">
    <source>
    </source>
</evidence>
<evidence type="ECO:0000305" key="4"/>
<dbReference type="PIR" id="S00802">
    <property type="entry name" value="S00802"/>
</dbReference>
<dbReference type="InParanoid" id="P25508"/>
<dbReference type="Proteomes" id="UP000009136">
    <property type="component" value="Unplaced"/>
</dbReference>
<dbReference type="GO" id="GO:0005581">
    <property type="term" value="C:collagen trimer"/>
    <property type="evidence" value="ECO:0007669"/>
    <property type="project" value="UniProtKB-KW"/>
</dbReference>
<dbReference type="GO" id="GO:0005576">
    <property type="term" value="C:extracellular region"/>
    <property type="evidence" value="ECO:0007669"/>
    <property type="project" value="UniProtKB-KW"/>
</dbReference>
<dbReference type="GO" id="GO:0007155">
    <property type="term" value="P:cell adhesion"/>
    <property type="evidence" value="ECO:0007669"/>
    <property type="project" value="UniProtKB-KW"/>
</dbReference>
<dbReference type="InterPro" id="IPR008160">
    <property type="entry name" value="Collagen"/>
</dbReference>
<dbReference type="InterPro" id="IPR050149">
    <property type="entry name" value="Collagen_superfamily"/>
</dbReference>
<dbReference type="PANTHER" id="PTHR24023:SF1112">
    <property type="entry name" value="COL_CUTICLE_N DOMAIN-CONTAINING PROTEIN-RELATED"/>
    <property type="match status" value="1"/>
</dbReference>
<dbReference type="PANTHER" id="PTHR24023">
    <property type="entry name" value="COLLAGEN ALPHA"/>
    <property type="match status" value="1"/>
</dbReference>
<dbReference type="Pfam" id="PF01391">
    <property type="entry name" value="Collagen"/>
    <property type="match status" value="2"/>
</dbReference>
<name>COCA1_BOVIN</name>
<accession>P25508</accession>
<proteinExistence type="evidence at protein level"/>
<comment type="function">
    <text>Type XII collagen interacts with type I collagen-containing fibrils, the COL1 domain could be associated with the surface of the fibrils, and the COL2 and NC3 domains may be localized in the perifibrillar matrix.</text>
</comment>
<comment type="subunit">
    <text>Trimer of identical chains each containing 190 kDa of non-triple-helical sequences.</text>
</comment>
<comment type="subcellular location">
    <subcellularLocation>
        <location evidence="1">Secreted</location>
        <location evidence="1">Extracellular space</location>
        <location evidence="1">Extracellular matrix</location>
    </subcellularLocation>
</comment>
<comment type="PTM">
    <text>The triple-helical tail is stabilized by disulfide bonds at each end.</text>
</comment>
<comment type="PTM">
    <text evidence="3">Prolines at the third position of the tripeptide repeating unit (G-X-Y) are hydroxylated in some or all of the chains.</text>
</comment>
<comment type="similarity">
    <text evidence="4">Belongs to the fibril-associated collagens with interrupted helices (FACIT) family.</text>
</comment>
<feature type="chain" id="PRO_0000059401" description="Collagen alpha-1(XII) chain">
    <location>
        <begin position="1" status="less than"/>
        <end position="86" status="greater than"/>
    </location>
</feature>
<feature type="region of interest" description="Disordered" evidence="2">
    <location>
        <begin position="1"/>
        <end position="86"/>
    </location>
</feature>
<feature type="compositionally biased region" description="Pro residues" evidence="2">
    <location>
        <begin position="1"/>
        <end position="12"/>
    </location>
</feature>
<feature type="compositionally biased region" description="Gly residues" evidence="2">
    <location>
        <begin position="16"/>
        <end position="25"/>
    </location>
</feature>
<feature type="compositionally biased region" description="Low complexity" evidence="2">
    <location>
        <begin position="35"/>
        <end position="50"/>
    </location>
</feature>
<feature type="compositionally biased region" description="Low complexity" evidence="2">
    <location>
        <begin position="57"/>
        <end position="71"/>
    </location>
</feature>
<feature type="modified residue" description="Hydroxyproline" evidence="3">
    <location>
        <position position="6"/>
    </location>
</feature>
<feature type="modified residue" description="Hydroxyproline" evidence="3">
    <location>
        <position position="9"/>
    </location>
</feature>
<feature type="modified residue" description="Hydroxyproline" evidence="3">
    <location>
        <position position="12"/>
    </location>
</feature>
<feature type="modified residue" description="Hydroxyproline" evidence="3">
    <location>
        <position position="18"/>
    </location>
</feature>
<feature type="modified residue" description="Hydroxyproline" evidence="3">
    <location>
        <position position="24"/>
    </location>
</feature>
<feature type="modified residue" description="Hydroxyproline" evidence="3">
    <location>
        <position position="27"/>
    </location>
</feature>
<feature type="modified residue" description="Hydroxyproline" evidence="3">
    <location>
        <position position="30"/>
    </location>
</feature>
<feature type="modified residue" description="Hydroxyproline" evidence="3">
    <location>
        <position position="42"/>
    </location>
</feature>
<feature type="modified residue" description="Hydroxyproline" evidence="3">
    <location>
        <position position="51"/>
    </location>
</feature>
<feature type="modified residue" description="Hydroxyproline" evidence="3">
    <location>
        <position position="54"/>
    </location>
</feature>
<feature type="modified residue" description="Hydroxyproline" evidence="3">
    <location>
        <position position="65"/>
    </location>
</feature>
<feature type="modified residue" description="Hydroxyproline" evidence="3">
    <location>
        <position position="74"/>
    </location>
</feature>
<feature type="modified residue" description="Hydroxyproline" evidence="3">
    <location>
        <position position="77"/>
    </location>
</feature>
<feature type="modified residue" description="Hydroxyproline" evidence="3">
    <location>
        <position position="80"/>
    </location>
</feature>
<feature type="non-consecutive residues" evidence="4">
    <location>
        <begin position="15"/>
        <end position="16"/>
    </location>
</feature>
<feature type="non-consecutive residues" evidence="4">
    <location>
        <begin position="48"/>
        <end position="49"/>
    </location>
</feature>
<feature type="non-terminal residue">
    <location>
        <position position="1"/>
    </location>
</feature>
<feature type="non-terminal residue">
    <location>
        <position position="86"/>
    </location>
</feature>